<dbReference type="EC" id="4.6.1.18"/>
<dbReference type="EMBL" id="Y11672">
    <property type="protein sequence ID" value="CAA72370.1"/>
    <property type="molecule type" value="Genomic_DNA"/>
</dbReference>
<dbReference type="PIR" id="A90613">
    <property type="entry name" value="NRDEO"/>
</dbReference>
<dbReference type="SMR" id="P00664"/>
<dbReference type="GlyCosmos" id="P00664">
    <property type="glycosylation" value="1 site, No reported glycans"/>
</dbReference>
<dbReference type="iPTMnet" id="P00664"/>
<dbReference type="GO" id="GO:0005576">
    <property type="term" value="C:extracellular region"/>
    <property type="evidence" value="ECO:0007669"/>
    <property type="project" value="UniProtKB-SubCell"/>
</dbReference>
<dbReference type="GO" id="GO:0016829">
    <property type="term" value="F:lyase activity"/>
    <property type="evidence" value="ECO:0007669"/>
    <property type="project" value="UniProtKB-KW"/>
</dbReference>
<dbReference type="GO" id="GO:0003676">
    <property type="term" value="F:nucleic acid binding"/>
    <property type="evidence" value="ECO:0007669"/>
    <property type="project" value="InterPro"/>
</dbReference>
<dbReference type="GO" id="GO:0004522">
    <property type="term" value="F:ribonuclease A activity"/>
    <property type="evidence" value="ECO:0007669"/>
    <property type="project" value="UniProtKB-EC"/>
</dbReference>
<dbReference type="GO" id="GO:0050830">
    <property type="term" value="P:defense response to Gram-positive bacterium"/>
    <property type="evidence" value="ECO:0007669"/>
    <property type="project" value="TreeGrafter"/>
</dbReference>
<dbReference type="CDD" id="cd06265">
    <property type="entry name" value="RNase_A_canonical"/>
    <property type="match status" value="1"/>
</dbReference>
<dbReference type="FunFam" id="3.10.130.10:FF:000001">
    <property type="entry name" value="Ribonuclease pancreatic"/>
    <property type="match status" value="1"/>
</dbReference>
<dbReference type="Gene3D" id="3.10.130.10">
    <property type="entry name" value="Ribonuclease A-like domain"/>
    <property type="match status" value="1"/>
</dbReference>
<dbReference type="InterPro" id="IPR001427">
    <property type="entry name" value="RNaseA"/>
</dbReference>
<dbReference type="InterPro" id="IPR036816">
    <property type="entry name" value="RNaseA-like_dom_sf"/>
</dbReference>
<dbReference type="InterPro" id="IPR023411">
    <property type="entry name" value="RNaseA_AS"/>
</dbReference>
<dbReference type="InterPro" id="IPR023412">
    <property type="entry name" value="RNaseA_domain"/>
</dbReference>
<dbReference type="PANTHER" id="PTHR11437">
    <property type="entry name" value="RIBONUCLEASE"/>
    <property type="match status" value="1"/>
</dbReference>
<dbReference type="PANTHER" id="PTHR11437:SF24">
    <property type="entry name" value="RIBONUCLEASE PANCREATIC"/>
    <property type="match status" value="1"/>
</dbReference>
<dbReference type="Pfam" id="PF00074">
    <property type="entry name" value="RnaseA"/>
    <property type="match status" value="1"/>
</dbReference>
<dbReference type="PRINTS" id="PR00794">
    <property type="entry name" value="RIBONUCLEASE"/>
</dbReference>
<dbReference type="SMART" id="SM00092">
    <property type="entry name" value="RNAse_Pc"/>
    <property type="match status" value="1"/>
</dbReference>
<dbReference type="SUPFAM" id="SSF54076">
    <property type="entry name" value="RNase A-like"/>
    <property type="match status" value="1"/>
</dbReference>
<dbReference type="PROSITE" id="PS00127">
    <property type="entry name" value="RNASE_PANCREATIC"/>
    <property type="match status" value="1"/>
</dbReference>
<keyword id="KW-0903">Direct protein sequencing</keyword>
<keyword id="KW-1015">Disulfide bond</keyword>
<keyword id="KW-0255">Endonuclease</keyword>
<keyword id="KW-0325">Glycoprotein</keyword>
<keyword id="KW-0378">Hydrolase</keyword>
<keyword id="KW-0456">Lyase</keyword>
<keyword id="KW-0540">Nuclease</keyword>
<keyword id="KW-0964">Secreted</keyword>
<gene>
    <name type="primary">RNASE1</name>
    <name type="synonym">RNS1</name>
</gene>
<comment type="function">
    <text evidence="1">Endonuclease that catalyzes the cleavage of RNA on the 3' side of pyrimidine nucleotides. Acts on single-stranded and double-stranded RNA (By similarity).</text>
</comment>
<comment type="catalytic activity">
    <reaction>
        <text>an [RNA] containing cytidine + H2O = an [RNA]-3'-cytidine-3'-phosphate + a 5'-hydroxy-ribonucleotide-3'-[RNA].</text>
        <dbReference type="EC" id="4.6.1.18"/>
    </reaction>
</comment>
<comment type="catalytic activity">
    <reaction>
        <text>an [RNA] containing uridine + H2O = an [RNA]-3'-uridine-3'-phosphate + a 5'-hydroxy-ribonucleotide-3'-[RNA].</text>
        <dbReference type="EC" id="4.6.1.18"/>
    </reaction>
</comment>
<comment type="subunit">
    <text evidence="1">Monomer. Interacts with and forms tight 1:1 complexes with RNH1. Dimerization of two such complexes may occur. Interaction with RNH1 inhibits this protein (By similarity).</text>
</comment>
<comment type="subcellular location">
    <subcellularLocation>
        <location>Secreted</location>
    </subcellularLocation>
</comment>
<comment type="tissue specificity">
    <text>Pancreas.</text>
</comment>
<comment type="similarity">
    <text evidence="4">Belongs to the pancreatic ribonuclease family.</text>
</comment>
<sequence>KESAAAKFERQHMDPSPSSASSSNYCNQMMQSRNLTQDRCKPVNTFVHESLADVQAVCFQKNVICKNGQSNCYQSNSAMHITDCRESGNSKYPNCVYKTTQAEKHIIVACEGNPYVPVHFDASV</sequence>
<reference key="1">
    <citation type="journal article" date="1973" name="Eur. J. Biochem.">
        <title>Amino-acid sequences of red-deer and roe-deer pancreatic ribonucleases.</title>
        <authorList>
            <person name="Zwiers H."/>
            <person name="Scheffer A.J."/>
            <person name="Beintema J.J."/>
        </authorList>
    </citation>
    <scope>PROTEIN SEQUENCE</scope>
    <scope>GLYCOSYLATION AT ASN-34</scope>
    <source>
        <tissue>Pancreas</tissue>
    </source>
</reference>
<reference key="2">
    <citation type="journal article" date="1977" name="Biochim. Biophys. Acta">
        <title>Reinvestigation of the primary structures of red deer and roe deer pancreatic ribonuclease and proline sites in mammalian ribonucleases.</title>
        <authorList>
            <person name="Oosterhuis S."/>
            <person name="Welling G.W."/>
            <person name="Gaastra W."/>
            <person name="Beintema J.J."/>
        </authorList>
    </citation>
    <scope>SEQUENCE REVISION</scope>
</reference>
<reference key="3">
    <citation type="journal article" date="1998" name="Gene">
        <title>Secretory ribonuclease genes and pseudogenes in true ruminants.</title>
        <authorList>
            <person name="Breukelman H.J."/>
            <person name="van der Munnik N."/>
            <person name="Kleineidam R.G."/>
            <person name="Furia A."/>
            <person name="Beintema J.J."/>
        </authorList>
    </citation>
    <scope>NUCLEOTIDE SEQUENCE [GENOMIC DNA]</scope>
</reference>
<evidence type="ECO:0000250" key="1"/>
<evidence type="ECO:0000256" key="2">
    <source>
        <dbReference type="SAM" id="MobiDB-lite"/>
    </source>
</evidence>
<evidence type="ECO:0000269" key="3">
    <source>
    </source>
</evidence>
<evidence type="ECO:0000305" key="4"/>
<accession>P00664</accession>
<protein>
    <recommendedName>
        <fullName>Ribonuclease pancreatic</fullName>
        <ecNumber>4.6.1.18</ecNumber>
    </recommendedName>
    <alternativeName>
        <fullName>RNase 1</fullName>
    </alternativeName>
    <alternativeName>
        <fullName>RNase A</fullName>
    </alternativeName>
</protein>
<proteinExistence type="evidence at protein level"/>
<organism>
    <name type="scientific">Capreolus capreolus</name>
    <name type="common">European roe deer</name>
    <name type="synonym">Cervus capreolus</name>
    <dbReference type="NCBI Taxonomy" id="9858"/>
    <lineage>
        <taxon>Eukaryota</taxon>
        <taxon>Metazoa</taxon>
        <taxon>Chordata</taxon>
        <taxon>Craniata</taxon>
        <taxon>Vertebrata</taxon>
        <taxon>Euteleostomi</taxon>
        <taxon>Mammalia</taxon>
        <taxon>Eutheria</taxon>
        <taxon>Laurasiatheria</taxon>
        <taxon>Artiodactyla</taxon>
        <taxon>Ruminantia</taxon>
        <taxon>Pecora</taxon>
        <taxon>Cervidae</taxon>
        <taxon>Odocoileinae</taxon>
        <taxon>Capreolus</taxon>
    </lineage>
</organism>
<feature type="chain" id="PRO_0000057186" description="Ribonuclease pancreatic">
    <location>
        <begin position="1"/>
        <end position="124"/>
    </location>
</feature>
<feature type="region of interest" description="Disordered" evidence="2">
    <location>
        <begin position="1"/>
        <end position="25"/>
    </location>
</feature>
<feature type="compositionally biased region" description="Basic and acidic residues" evidence="2">
    <location>
        <begin position="1"/>
        <end position="13"/>
    </location>
</feature>
<feature type="active site" description="Proton acceptor" evidence="1">
    <location>
        <position position="12"/>
    </location>
</feature>
<feature type="active site" description="Proton donor" evidence="1">
    <location>
        <position position="119"/>
    </location>
</feature>
<feature type="binding site" evidence="1">
    <location>
        <position position="7"/>
    </location>
    <ligand>
        <name>substrate</name>
    </ligand>
</feature>
<feature type="binding site" evidence="1">
    <location>
        <position position="10"/>
    </location>
    <ligand>
        <name>substrate</name>
    </ligand>
</feature>
<feature type="binding site" evidence="1">
    <location>
        <begin position="41"/>
        <end position="45"/>
    </location>
    <ligand>
        <name>substrate</name>
    </ligand>
</feature>
<feature type="binding site" evidence="1">
    <location>
        <position position="66"/>
    </location>
    <ligand>
        <name>substrate</name>
    </ligand>
</feature>
<feature type="binding site" evidence="1">
    <location>
        <position position="85"/>
    </location>
    <ligand>
        <name>substrate</name>
    </ligand>
</feature>
<feature type="glycosylation site" description="N-linked (GlcNAc...) asparagine; partial" evidence="3">
    <location>
        <position position="34"/>
    </location>
</feature>
<feature type="disulfide bond" evidence="1">
    <location>
        <begin position="26"/>
        <end position="84"/>
    </location>
</feature>
<feature type="disulfide bond" evidence="1">
    <location>
        <begin position="40"/>
        <end position="95"/>
    </location>
</feature>
<feature type="disulfide bond" evidence="1">
    <location>
        <begin position="58"/>
        <end position="110"/>
    </location>
</feature>
<feature type="disulfide bond" evidence="1">
    <location>
        <begin position="65"/>
        <end position="72"/>
    </location>
</feature>
<name>RNAS1_CAPCA</name>